<name>ARCH_SULTO</name>
<keyword id="KW-0106">Calcium</keyword>
<keyword id="KW-0479">Metal-binding</keyword>
<keyword id="KW-1185">Reference proteome</keyword>
<keyword id="KW-0819">tRNA processing</keyword>
<organism>
    <name type="scientific">Sulfurisphaera tokodaii (strain DSM 16993 / JCM 10545 / NBRC 100140 / 7)</name>
    <name type="common">Sulfolobus tokodaii</name>
    <dbReference type="NCBI Taxonomy" id="273063"/>
    <lineage>
        <taxon>Archaea</taxon>
        <taxon>Thermoproteota</taxon>
        <taxon>Thermoprotei</taxon>
        <taxon>Sulfolobales</taxon>
        <taxon>Sulfolobaceae</taxon>
        <taxon>Sulfurisphaera</taxon>
    </lineage>
</organism>
<reference key="1">
    <citation type="journal article" date="2001" name="DNA Res.">
        <title>Complete genome sequence of an aerobic thermoacidophilic Crenarchaeon, Sulfolobus tokodaii strain7.</title>
        <authorList>
            <person name="Kawarabayasi Y."/>
            <person name="Hino Y."/>
            <person name="Horikawa H."/>
            <person name="Jin-no K."/>
            <person name="Takahashi M."/>
            <person name="Sekine M."/>
            <person name="Baba S."/>
            <person name="Ankai A."/>
            <person name="Kosugi H."/>
            <person name="Hosoyama A."/>
            <person name="Fukui S."/>
            <person name="Nagai Y."/>
            <person name="Nishijima K."/>
            <person name="Otsuka R."/>
            <person name="Nakazawa H."/>
            <person name="Takamiya M."/>
            <person name="Kato Y."/>
            <person name="Yoshizawa T."/>
            <person name="Tanaka T."/>
            <person name="Kudoh Y."/>
            <person name="Yamazaki J."/>
            <person name="Kushida N."/>
            <person name="Oguchi A."/>
            <person name="Aoki K."/>
            <person name="Masuda S."/>
            <person name="Yanagii M."/>
            <person name="Nishimura M."/>
            <person name="Yamagishi A."/>
            <person name="Oshima T."/>
            <person name="Kikuchi H."/>
        </authorList>
    </citation>
    <scope>NUCLEOTIDE SEQUENCE [LARGE SCALE GENOMIC DNA]</scope>
    <source>
        <strain>DSM 16993 / JCM 10545 / NBRC 100140 / 7</strain>
    </source>
</reference>
<sequence length="139" mass="16530">MQKFEFFEHTADIGIRAYGRNLNEAFENAAVAVFEVMTDTSKVEPKEMREVKIDGYDLENLLYRWIESLLVYYDSEIMLFSKFYVNIDEKNLTLEGKAWGEKFDPNKHERRTVVKAMTYHEMKIENKGNYYILTFVVDI</sequence>
<accession>Q975L0</accession>
<proteinExistence type="inferred from homology"/>
<protein>
    <recommendedName>
        <fullName evidence="2">Protein archease</fullName>
    </recommendedName>
</protein>
<evidence type="ECO:0000250" key="1"/>
<evidence type="ECO:0000255" key="2">
    <source>
        <dbReference type="HAMAP-Rule" id="MF_01222"/>
    </source>
</evidence>
<feature type="chain" id="PRO_0000068854" description="Protein archease">
    <location>
        <begin position="1"/>
        <end position="139"/>
    </location>
</feature>
<feature type="binding site" evidence="1">
    <location>
        <position position="12"/>
    </location>
    <ligand>
        <name>Ca(2+)</name>
        <dbReference type="ChEBI" id="CHEBI:29108"/>
    </ligand>
</feature>
<feature type="binding site" evidence="1">
    <location>
        <position position="138"/>
    </location>
    <ligand>
        <name>Ca(2+)</name>
        <dbReference type="ChEBI" id="CHEBI:29108"/>
    </ligand>
</feature>
<feature type="binding site" evidence="1">
    <location>
        <position position="139"/>
    </location>
    <ligand>
        <name>Ca(2+)</name>
        <dbReference type="ChEBI" id="CHEBI:29108"/>
    </ligand>
</feature>
<comment type="function">
    <text evidence="1">Activates the tRNA-splicing ligase complex by facilitating the enzymatic turnover of catalytic subunit RtcB. Acts by promoting the guanylylation of RtcB, a key intermediate step in tRNA ligation. Can also alter the NTP specificity of RtcB such that ATP, dGTP or ITP is used efficiently (By similarity).</text>
</comment>
<comment type="similarity">
    <text evidence="2">Belongs to the archease family.</text>
</comment>
<dbReference type="EMBL" id="BA000023">
    <property type="protein sequence ID" value="BAB65390.1"/>
    <property type="molecule type" value="Genomic_DNA"/>
</dbReference>
<dbReference type="RefSeq" id="WP_010978373.1">
    <property type="nucleotide sequence ID" value="NC_003106.2"/>
</dbReference>
<dbReference type="SMR" id="Q975L0"/>
<dbReference type="STRING" id="273063.STK_04060"/>
<dbReference type="GeneID" id="1458337"/>
<dbReference type="KEGG" id="sto:STK_04060"/>
<dbReference type="PATRIC" id="fig|273063.9.peg.469"/>
<dbReference type="eggNOG" id="arCOG04055">
    <property type="taxonomic scope" value="Archaea"/>
</dbReference>
<dbReference type="OrthoDB" id="8831at2157"/>
<dbReference type="Proteomes" id="UP000001015">
    <property type="component" value="Chromosome"/>
</dbReference>
<dbReference type="GO" id="GO:0005509">
    <property type="term" value="F:calcium ion binding"/>
    <property type="evidence" value="ECO:0007669"/>
    <property type="project" value="UniProtKB-UniRule"/>
</dbReference>
<dbReference type="GO" id="GO:0006388">
    <property type="term" value="P:tRNA splicing, via endonucleolytic cleavage and ligation"/>
    <property type="evidence" value="ECO:0007669"/>
    <property type="project" value="UniProtKB-UniRule"/>
</dbReference>
<dbReference type="Gene3D" id="3.55.10.10">
    <property type="entry name" value="Archease domain"/>
    <property type="match status" value="1"/>
</dbReference>
<dbReference type="HAMAP" id="MF_01222">
    <property type="entry name" value="Archease_arch"/>
    <property type="match status" value="1"/>
</dbReference>
<dbReference type="InterPro" id="IPR002804">
    <property type="entry name" value="Archease"/>
</dbReference>
<dbReference type="InterPro" id="IPR022952">
    <property type="entry name" value="Archease_arc"/>
</dbReference>
<dbReference type="InterPro" id="IPR023572">
    <property type="entry name" value="Archease_dom"/>
</dbReference>
<dbReference type="InterPro" id="IPR036820">
    <property type="entry name" value="Archease_dom_sf"/>
</dbReference>
<dbReference type="NCBIfam" id="NF001617">
    <property type="entry name" value="PRK00407.1"/>
    <property type="match status" value="1"/>
</dbReference>
<dbReference type="PANTHER" id="PTHR12682">
    <property type="entry name" value="ARCHEASE"/>
    <property type="match status" value="1"/>
</dbReference>
<dbReference type="PANTHER" id="PTHR12682:SF11">
    <property type="entry name" value="PROTEIN ARCHEASE"/>
    <property type="match status" value="1"/>
</dbReference>
<dbReference type="Pfam" id="PF01951">
    <property type="entry name" value="Archease"/>
    <property type="match status" value="1"/>
</dbReference>
<dbReference type="SUPFAM" id="SSF69819">
    <property type="entry name" value="MTH1598-like"/>
    <property type="match status" value="1"/>
</dbReference>
<gene>
    <name type="ordered locus">STK_04060</name>
</gene>